<organism>
    <name type="scientific">Bifidobacterium animalis subsp. lactis (strain AD011)</name>
    <dbReference type="NCBI Taxonomy" id="442563"/>
    <lineage>
        <taxon>Bacteria</taxon>
        <taxon>Bacillati</taxon>
        <taxon>Actinomycetota</taxon>
        <taxon>Actinomycetes</taxon>
        <taxon>Bifidobacteriales</taxon>
        <taxon>Bifidobacteriaceae</taxon>
        <taxon>Bifidobacterium</taxon>
    </lineage>
</organism>
<evidence type="ECO:0000255" key="1">
    <source>
        <dbReference type="HAMAP-Rule" id="MF_00054"/>
    </source>
</evidence>
<sequence length="709" mass="78551">MALDVLTNLNQVRNIGIMAHIDAGKTTTTERILFYTGKNYKIGETHEGASTMDFMAQEKERGITIQSAATTCFWNRQTHDPDEKFQINIIDTPGHVDFTAEVERSLRVLDGAVAVFDGKEGVEPQSETVWRQADKYGVPRICFINKMDKLGADFYYSVSTIKEKLGATPLVVQLPIGAENDFSGVVDLIRMKAYVWNDIKDDQGAHYDTVEIPDDLKERAEQYRSELLDQVAETDEELLEKYLENGDLSEQEIRGAIRQLTIAREAYPVLCGSAFKDKGVQPMLDAVVDYLPSPEDVPSIVGFDPSDESVEIDRKPTMDDPFSALVFKISTHPFYGKLVFVRVYSGSVKPGDNVLDSTKGKKERVGKIFQMHADKENPVDAAEAGNIYTFVGLKNVTTGDTLCDEKHPISLESMTFPDPVIEVAVEPKTKADQEKMSLALAKLSDEDPTFQVKTDEESGQTLISGMGELQLDIIVDRMRREFKVECNVGKPQVAYRETIRKAVMNQEYTHKKQTGGSGQFAKVLMNFEPLDTENGEVYEFVNEVTGGHITKEFIPSIDAGVQEAMESGILAGFPVVGVKATVTDGQVHDVDSSEMAFKIAGSMCFKEAAPKAKPVILEPIMAVEVRTPEEYMGDVMGDLNSRRGSIQSMNDATGVKVIDAKVPLSEMFGYIGDLRSKTQGRAMFTMQMDSYAEVPKAVADEIIKAQRGE</sequence>
<gene>
    <name evidence="1" type="primary">fusA</name>
    <name type="ordered locus">BLA_1147</name>
</gene>
<dbReference type="EMBL" id="CP001213">
    <property type="protein sequence ID" value="ACL29435.1"/>
    <property type="molecule type" value="Genomic_DNA"/>
</dbReference>
<dbReference type="RefSeq" id="WP_004269068.1">
    <property type="nucleotide sequence ID" value="NC_011835.1"/>
</dbReference>
<dbReference type="SMR" id="B8DTV6"/>
<dbReference type="STRING" id="442563.BLA_1147"/>
<dbReference type="GeneID" id="29695901"/>
<dbReference type="KEGG" id="bla:BLA_1147"/>
<dbReference type="HOGENOM" id="CLU_002794_4_1_11"/>
<dbReference type="Proteomes" id="UP000002456">
    <property type="component" value="Chromosome"/>
</dbReference>
<dbReference type="GO" id="GO:0005737">
    <property type="term" value="C:cytoplasm"/>
    <property type="evidence" value="ECO:0007669"/>
    <property type="project" value="UniProtKB-SubCell"/>
</dbReference>
<dbReference type="GO" id="GO:0005525">
    <property type="term" value="F:GTP binding"/>
    <property type="evidence" value="ECO:0007669"/>
    <property type="project" value="UniProtKB-UniRule"/>
</dbReference>
<dbReference type="GO" id="GO:0003924">
    <property type="term" value="F:GTPase activity"/>
    <property type="evidence" value="ECO:0007669"/>
    <property type="project" value="InterPro"/>
</dbReference>
<dbReference type="GO" id="GO:0003746">
    <property type="term" value="F:translation elongation factor activity"/>
    <property type="evidence" value="ECO:0007669"/>
    <property type="project" value="UniProtKB-UniRule"/>
</dbReference>
<dbReference type="GO" id="GO:0032790">
    <property type="term" value="P:ribosome disassembly"/>
    <property type="evidence" value="ECO:0007669"/>
    <property type="project" value="TreeGrafter"/>
</dbReference>
<dbReference type="CDD" id="cd01886">
    <property type="entry name" value="EF-G"/>
    <property type="match status" value="1"/>
</dbReference>
<dbReference type="CDD" id="cd16262">
    <property type="entry name" value="EFG_III"/>
    <property type="match status" value="1"/>
</dbReference>
<dbReference type="CDD" id="cd01434">
    <property type="entry name" value="EFG_mtEFG1_IV"/>
    <property type="match status" value="1"/>
</dbReference>
<dbReference type="CDD" id="cd03713">
    <property type="entry name" value="EFG_mtEFG_C"/>
    <property type="match status" value="1"/>
</dbReference>
<dbReference type="CDD" id="cd04088">
    <property type="entry name" value="EFG_mtEFG_II"/>
    <property type="match status" value="1"/>
</dbReference>
<dbReference type="FunFam" id="2.40.30.10:FF:000006">
    <property type="entry name" value="Elongation factor G"/>
    <property type="match status" value="1"/>
</dbReference>
<dbReference type="FunFam" id="3.30.230.10:FF:000003">
    <property type="entry name" value="Elongation factor G"/>
    <property type="match status" value="1"/>
</dbReference>
<dbReference type="FunFam" id="3.30.70.240:FF:000001">
    <property type="entry name" value="Elongation factor G"/>
    <property type="match status" value="1"/>
</dbReference>
<dbReference type="FunFam" id="3.30.70.870:FF:000001">
    <property type="entry name" value="Elongation factor G"/>
    <property type="match status" value="1"/>
</dbReference>
<dbReference type="FunFam" id="3.40.50.300:FF:000029">
    <property type="entry name" value="Elongation factor G"/>
    <property type="match status" value="1"/>
</dbReference>
<dbReference type="Gene3D" id="3.30.230.10">
    <property type="match status" value="1"/>
</dbReference>
<dbReference type="Gene3D" id="3.30.70.240">
    <property type="match status" value="1"/>
</dbReference>
<dbReference type="Gene3D" id="3.30.70.870">
    <property type="entry name" value="Elongation Factor G (Translational Gtpase), domain 3"/>
    <property type="match status" value="1"/>
</dbReference>
<dbReference type="Gene3D" id="3.40.50.300">
    <property type="entry name" value="P-loop containing nucleotide triphosphate hydrolases"/>
    <property type="match status" value="1"/>
</dbReference>
<dbReference type="Gene3D" id="2.40.30.10">
    <property type="entry name" value="Translation factors"/>
    <property type="match status" value="1"/>
</dbReference>
<dbReference type="HAMAP" id="MF_00054_B">
    <property type="entry name" value="EF_G_EF_2_B"/>
    <property type="match status" value="1"/>
</dbReference>
<dbReference type="InterPro" id="IPR041095">
    <property type="entry name" value="EFG_II"/>
</dbReference>
<dbReference type="InterPro" id="IPR009022">
    <property type="entry name" value="EFG_III"/>
</dbReference>
<dbReference type="InterPro" id="IPR035647">
    <property type="entry name" value="EFG_III/V"/>
</dbReference>
<dbReference type="InterPro" id="IPR047872">
    <property type="entry name" value="EFG_IV"/>
</dbReference>
<dbReference type="InterPro" id="IPR035649">
    <property type="entry name" value="EFG_V"/>
</dbReference>
<dbReference type="InterPro" id="IPR000640">
    <property type="entry name" value="EFG_V-like"/>
</dbReference>
<dbReference type="InterPro" id="IPR004161">
    <property type="entry name" value="EFTu-like_2"/>
</dbReference>
<dbReference type="InterPro" id="IPR031157">
    <property type="entry name" value="G_TR_CS"/>
</dbReference>
<dbReference type="InterPro" id="IPR027417">
    <property type="entry name" value="P-loop_NTPase"/>
</dbReference>
<dbReference type="InterPro" id="IPR020568">
    <property type="entry name" value="Ribosomal_Su5_D2-typ_SF"/>
</dbReference>
<dbReference type="InterPro" id="IPR014721">
    <property type="entry name" value="Ribsml_uS5_D2-typ_fold_subgr"/>
</dbReference>
<dbReference type="InterPro" id="IPR005225">
    <property type="entry name" value="Small_GTP-bd"/>
</dbReference>
<dbReference type="InterPro" id="IPR000795">
    <property type="entry name" value="T_Tr_GTP-bd_dom"/>
</dbReference>
<dbReference type="InterPro" id="IPR009000">
    <property type="entry name" value="Transl_B-barrel_sf"/>
</dbReference>
<dbReference type="InterPro" id="IPR004540">
    <property type="entry name" value="Transl_elong_EFG/EF2"/>
</dbReference>
<dbReference type="InterPro" id="IPR005517">
    <property type="entry name" value="Transl_elong_EFG/EF2_IV"/>
</dbReference>
<dbReference type="NCBIfam" id="TIGR00484">
    <property type="entry name" value="EF-G"/>
    <property type="match status" value="1"/>
</dbReference>
<dbReference type="NCBIfam" id="NF009381">
    <property type="entry name" value="PRK12740.1-5"/>
    <property type="match status" value="1"/>
</dbReference>
<dbReference type="NCBIfam" id="TIGR00231">
    <property type="entry name" value="small_GTP"/>
    <property type="match status" value="1"/>
</dbReference>
<dbReference type="PANTHER" id="PTHR43261:SF1">
    <property type="entry name" value="RIBOSOME-RELEASING FACTOR 2, MITOCHONDRIAL"/>
    <property type="match status" value="1"/>
</dbReference>
<dbReference type="PANTHER" id="PTHR43261">
    <property type="entry name" value="TRANSLATION ELONGATION FACTOR G-RELATED"/>
    <property type="match status" value="1"/>
</dbReference>
<dbReference type="Pfam" id="PF00679">
    <property type="entry name" value="EFG_C"/>
    <property type="match status" value="1"/>
</dbReference>
<dbReference type="Pfam" id="PF14492">
    <property type="entry name" value="EFG_III"/>
    <property type="match status" value="1"/>
</dbReference>
<dbReference type="Pfam" id="PF03764">
    <property type="entry name" value="EFG_IV"/>
    <property type="match status" value="1"/>
</dbReference>
<dbReference type="Pfam" id="PF00009">
    <property type="entry name" value="GTP_EFTU"/>
    <property type="match status" value="1"/>
</dbReference>
<dbReference type="Pfam" id="PF03144">
    <property type="entry name" value="GTP_EFTU_D2"/>
    <property type="match status" value="1"/>
</dbReference>
<dbReference type="PRINTS" id="PR00315">
    <property type="entry name" value="ELONGATNFCT"/>
</dbReference>
<dbReference type="SMART" id="SM00838">
    <property type="entry name" value="EFG_C"/>
    <property type="match status" value="1"/>
</dbReference>
<dbReference type="SMART" id="SM00889">
    <property type="entry name" value="EFG_IV"/>
    <property type="match status" value="1"/>
</dbReference>
<dbReference type="SUPFAM" id="SSF54980">
    <property type="entry name" value="EF-G C-terminal domain-like"/>
    <property type="match status" value="2"/>
</dbReference>
<dbReference type="SUPFAM" id="SSF52540">
    <property type="entry name" value="P-loop containing nucleoside triphosphate hydrolases"/>
    <property type="match status" value="1"/>
</dbReference>
<dbReference type="SUPFAM" id="SSF54211">
    <property type="entry name" value="Ribosomal protein S5 domain 2-like"/>
    <property type="match status" value="1"/>
</dbReference>
<dbReference type="SUPFAM" id="SSF50447">
    <property type="entry name" value="Translation proteins"/>
    <property type="match status" value="1"/>
</dbReference>
<dbReference type="PROSITE" id="PS00301">
    <property type="entry name" value="G_TR_1"/>
    <property type="match status" value="1"/>
</dbReference>
<dbReference type="PROSITE" id="PS51722">
    <property type="entry name" value="G_TR_2"/>
    <property type="match status" value="1"/>
</dbReference>
<proteinExistence type="inferred from homology"/>
<accession>B8DTV6</accession>
<reference key="1">
    <citation type="journal article" date="2009" name="J. Bacteriol.">
        <title>Genome sequence of the probiotic bacterium Bifidobacterium animalis subsp. lactis AD011.</title>
        <authorList>
            <person name="Kim J.F."/>
            <person name="Jeong H."/>
            <person name="Yu D.S."/>
            <person name="Choi S.-H."/>
            <person name="Hur C.-G."/>
            <person name="Park M.-S."/>
            <person name="Yoon S.H."/>
            <person name="Kim D.-W."/>
            <person name="Ji G.E."/>
            <person name="Park H.-S."/>
            <person name="Oh T.K."/>
        </authorList>
    </citation>
    <scope>NUCLEOTIDE SEQUENCE [LARGE SCALE GENOMIC DNA]</scope>
    <source>
        <strain>AD011</strain>
    </source>
</reference>
<protein>
    <recommendedName>
        <fullName evidence="1">Elongation factor G</fullName>
        <shortName evidence="1">EF-G</shortName>
    </recommendedName>
</protein>
<comment type="function">
    <text evidence="1">Catalyzes the GTP-dependent ribosomal translocation step during translation elongation. During this step, the ribosome changes from the pre-translocational (PRE) to the post-translocational (POST) state as the newly formed A-site-bound peptidyl-tRNA and P-site-bound deacylated tRNA move to the P and E sites, respectively. Catalyzes the coordinated movement of the two tRNA molecules, the mRNA and conformational changes in the ribosome.</text>
</comment>
<comment type="subcellular location">
    <subcellularLocation>
        <location evidence="1">Cytoplasm</location>
    </subcellularLocation>
</comment>
<comment type="similarity">
    <text evidence="1">Belongs to the TRAFAC class translation factor GTPase superfamily. Classic translation factor GTPase family. EF-G/EF-2 subfamily.</text>
</comment>
<feature type="chain" id="PRO_1000201440" description="Elongation factor G">
    <location>
        <begin position="1"/>
        <end position="709"/>
    </location>
</feature>
<feature type="domain" description="tr-type G">
    <location>
        <begin position="10"/>
        <end position="295"/>
    </location>
</feature>
<feature type="binding site" evidence="1">
    <location>
        <begin position="19"/>
        <end position="26"/>
    </location>
    <ligand>
        <name>GTP</name>
        <dbReference type="ChEBI" id="CHEBI:37565"/>
    </ligand>
</feature>
<feature type="binding site" evidence="1">
    <location>
        <begin position="91"/>
        <end position="95"/>
    </location>
    <ligand>
        <name>GTP</name>
        <dbReference type="ChEBI" id="CHEBI:37565"/>
    </ligand>
</feature>
<feature type="binding site" evidence="1">
    <location>
        <begin position="145"/>
        <end position="148"/>
    </location>
    <ligand>
        <name>GTP</name>
        <dbReference type="ChEBI" id="CHEBI:37565"/>
    </ligand>
</feature>
<keyword id="KW-0963">Cytoplasm</keyword>
<keyword id="KW-0251">Elongation factor</keyword>
<keyword id="KW-0342">GTP-binding</keyword>
<keyword id="KW-0547">Nucleotide-binding</keyword>
<keyword id="KW-0648">Protein biosynthesis</keyword>
<keyword id="KW-1185">Reference proteome</keyword>
<name>EFG_BIFA0</name>